<organism>
    <name type="scientific">Homo sapiens</name>
    <name type="common">Human</name>
    <dbReference type="NCBI Taxonomy" id="9606"/>
    <lineage>
        <taxon>Eukaryota</taxon>
        <taxon>Metazoa</taxon>
        <taxon>Chordata</taxon>
        <taxon>Craniata</taxon>
        <taxon>Vertebrata</taxon>
        <taxon>Euteleostomi</taxon>
        <taxon>Mammalia</taxon>
        <taxon>Eutheria</taxon>
        <taxon>Euarchontoglires</taxon>
        <taxon>Primates</taxon>
        <taxon>Haplorrhini</taxon>
        <taxon>Catarrhini</taxon>
        <taxon>Hominidae</taxon>
        <taxon>Homo</taxon>
    </lineage>
</organism>
<sequence length="1266" mass="143229">MWVNPEEVLLANALWITERANPYFILQRRKGHAGDGGGGGGLAGLLVGTLDVVLDSSARVAPYRILYQTPDSLVYWTIACGGSRKEITEHWEWLEQNLLQTLSIFENENDITTFVRGKIQGIIAEYNKINDVKEDDDTEKFKEAIVKFHRLFGMPEEEKLVNYYSCSYWKGKVPRQGWMYLSINHLCFYSFLMGREAKLVIRWVDITQLEKNATLLLPDVIKVSTRSSEHFFSVFLNINETFKLMEQLANIAMRQLLDNEGFEQDRSLPKLKRKSPKKVSALKRDLDARAKSERYRALFRLPKDEKLDGHTDCTLWTPFNKMHILGQMFVSTNYICFTSKEENLCSLIIPLREVTIVEKADSSSVLPSPLSISTRNRMTFLFANLKDRDFLVQRISDFLQQTTSKIYSDKEFAGSYNSSDDEVYSRPSSLVSSSPQRSTSSDADGERQFNLNGNSVPTATQTLMTMYRRRSPEEFNPKLAKEFLKEQAWKIHFAEYGQGICMYRTEKTRELVLKGIPESMRGELWLLLSGAINEKATHPGYYEDLVEKSMGKYNLATEEIERDLHRSLPEHPAFQNEMGIAALRRVLTAYAFRNPNIGYCQAMNIVTSVLLLYAKEEEAFWLLVALCERMLPDYYNTRVVGALVDQGVFEELARDYVPQLYDCMQDLGVISTISLSWFLTLFLSVMPFESAVVVVDCFFYEGIKVIFQLALAVLDANVDKLLNCKDDGEAMTVLGRYLDSVTNKDSTLPPIPHLHSLLSDDVEPYPEVDIFRLIRTSYEKFGTIRADLIEQMRFKQRLKVIQTLEDTTKRNVVRTIVTETSFTIDELEELYALFKAEHLTSCYWGGSSNALDRHDPSLPYLEQYRIDFEQFKGMFALLFPWACGTHSDVLASRLFQLLDENGDSLINFREFVSGLSAACHGDLTEKLKLLYKMHVLPEPSSDQDEPDSAFEATQYFFEDITPECTHVVGLDSRSKQGADDGFVTVSLKPDKGKRANSQENRNYLRLWTPENKSKSKNAKDLPKLNQGQFIELCKTMYNMFSEDPNEQELYHATAAVTSLLLEIGEVGKLFVAQPAKEGGSGGSGPSCHQGIPGVLFPKKGPGQPYVVESVEPLPASLAPDSEEHSLGGQMEDIKLEDSSPRDNGACSSMLISDDDTKDDSSMSSYSVLSAGSHEEDKLHCEDIGEDTVLVRSGQGTAALPRSTSLDRDWAITFEQFLASLLTEPALVKYFDKPVCMMARITSAKNIRMMGKPLTSASDYEISAMSG</sequence>
<feature type="chain" id="PRO_0000288499" description="TBC1 domain family member 9">
    <location>
        <begin position="1"/>
        <end position="1266"/>
    </location>
</feature>
<feature type="domain" description="GRAM 1">
    <location>
        <begin position="146"/>
        <end position="213"/>
    </location>
</feature>
<feature type="domain" description="GRAM 2">
    <location>
        <begin position="293"/>
        <end position="361"/>
    </location>
</feature>
<feature type="domain" description="Rab-GAP TBC" evidence="2">
    <location>
        <begin position="515"/>
        <end position="702"/>
    </location>
</feature>
<feature type="domain" description="EF-hand" evidence="3">
    <location>
        <begin position="886"/>
        <end position="921"/>
    </location>
</feature>
<feature type="region of interest" description="Disordered" evidence="4">
    <location>
        <begin position="415"/>
        <end position="456"/>
    </location>
</feature>
<feature type="region of interest" description="Disordered" evidence="4">
    <location>
        <begin position="1075"/>
        <end position="1095"/>
    </location>
</feature>
<feature type="region of interest" description="Disordered" evidence="4">
    <location>
        <begin position="1132"/>
        <end position="1164"/>
    </location>
</feature>
<feature type="compositionally biased region" description="Low complexity" evidence="4">
    <location>
        <begin position="425"/>
        <end position="441"/>
    </location>
</feature>
<feature type="site" description="Arginine finger" evidence="1">
    <location>
        <position position="562"/>
    </location>
</feature>
<feature type="site" description="Glutamine finger" evidence="1">
    <location>
        <position position="601"/>
    </location>
</feature>
<feature type="sequence variant" id="VAR_052539" description="In dbSNP:rs13108827.">
    <original>E</original>
    <variation>K</variation>
    <location>
        <position position="7"/>
    </location>
</feature>
<feature type="sequence variant" id="VAR_052540" description="In dbSNP:rs13118702.">
    <original>E</original>
    <variation>K</variation>
    <location>
        <position position="779"/>
    </location>
</feature>
<feature type="sequence conflict" description="In Ref. 6; BAC86789." evidence="5" ref="6">
    <original>S</original>
    <variation>G</variation>
    <location>
        <position position="1204"/>
    </location>
</feature>
<gene>
    <name type="primary">TBC1D9</name>
    <name type="synonym">KIAA0882</name>
    <name type="synonym">TBC1D9A</name>
</gene>
<accession>Q6ZT07</accession>
<accession>A6H8U8</accession>
<accession>D3DNZ1</accession>
<accession>O94958</accession>
<dbReference type="EMBL" id="AB449892">
    <property type="protein sequence ID" value="BAH16635.1"/>
    <property type="molecule type" value="mRNA"/>
</dbReference>
<dbReference type="EMBL" id="AB020689">
    <property type="protein sequence ID" value="BAA74905.2"/>
    <property type="status" value="ALT_INIT"/>
    <property type="molecule type" value="mRNA"/>
</dbReference>
<dbReference type="EMBL" id="CH471056">
    <property type="protein sequence ID" value="EAX05092.1"/>
    <property type="molecule type" value="Genomic_DNA"/>
</dbReference>
<dbReference type="EMBL" id="CH471056">
    <property type="protein sequence ID" value="EAX05094.1"/>
    <property type="molecule type" value="Genomic_DNA"/>
</dbReference>
<dbReference type="EMBL" id="BC146758">
    <property type="protein sequence ID" value="AAI46759.1"/>
    <property type="molecule type" value="mRNA"/>
</dbReference>
<dbReference type="EMBL" id="AK127020">
    <property type="protein sequence ID" value="BAC86789.1"/>
    <property type="status" value="ALT_SEQ"/>
    <property type="molecule type" value="mRNA"/>
</dbReference>
<dbReference type="CCDS" id="CCDS47136.1"/>
<dbReference type="RefSeq" id="NP_055945.2">
    <property type="nucleotide sequence ID" value="NM_015130.3"/>
</dbReference>
<dbReference type="SMR" id="Q6ZT07"/>
<dbReference type="BioGRID" id="116771">
    <property type="interactions" value="65"/>
</dbReference>
<dbReference type="FunCoup" id="Q6ZT07">
    <property type="interactions" value="1000"/>
</dbReference>
<dbReference type="IntAct" id="Q6ZT07">
    <property type="interactions" value="44"/>
</dbReference>
<dbReference type="MINT" id="Q6ZT07"/>
<dbReference type="STRING" id="9606.ENSP00000411197"/>
<dbReference type="iPTMnet" id="Q6ZT07"/>
<dbReference type="PhosphoSitePlus" id="Q6ZT07"/>
<dbReference type="BioMuta" id="TBC1D9"/>
<dbReference type="DMDM" id="148887054"/>
<dbReference type="jPOST" id="Q6ZT07"/>
<dbReference type="MassIVE" id="Q6ZT07"/>
<dbReference type="PaxDb" id="9606-ENSP00000411197"/>
<dbReference type="PeptideAtlas" id="Q6ZT07"/>
<dbReference type="ProteomicsDB" id="68251"/>
<dbReference type="Pumba" id="Q6ZT07"/>
<dbReference type="Antibodypedia" id="27252">
    <property type="antibodies" value="86 antibodies from 18 providers"/>
</dbReference>
<dbReference type="DNASU" id="23158"/>
<dbReference type="Ensembl" id="ENST00000442267.3">
    <property type="protein sequence ID" value="ENSP00000411197.2"/>
    <property type="gene ID" value="ENSG00000109436.8"/>
</dbReference>
<dbReference type="GeneID" id="23158"/>
<dbReference type="KEGG" id="hsa:23158"/>
<dbReference type="MANE-Select" id="ENST00000442267.3">
    <property type="protein sequence ID" value="ENSP00000411197.2"/>
    <property type="RefSeq nucleotide sequence ID" value="NM_015130.3"/>
    <property type="RefSeq protein sequence ID" value="NP_055945.2"/>
</dbReference>
<dbReference type="UCSC" id="uc010ioj.4">
    <property type="organism name" value="human"/>
</dbReference>
<dbReference type="AGR" id="HGNC:21710"/>
<dbReference type="CTD" id="23158"/>
<dbReference type="DisGeNET" id="23158"/>
<dbReference type="GeneCards" id="TBC1D9"/>
<dbReference type="HGNC" id="HGNC:21710">
    <property type="gene designation" value="TBC1D9"/>
</dbReference>
<dbReference type="HPA" id="ENSG00000109436">
    <property type="expression patterns" value="Low tissue specificity"/>
</dbReference>
<dbReference type="MIM" id="618035">
    <property type="type" value="gene"/>
</dbReference>
<dbReference type="neXtProt" id="NX_Q6ZT07"/>
<dbReference type="OpenTargets" id="ENSG00000109436"/>
<dbReference type="PharmGKB" id="PA128394607"/>
<dbReference type="VEuPathDB" id="HostDB:ENSG00000109436"/>
<dbReference type="eggNOG" id="KOG4347">
    <property type="taxonomic scope" value="Eukaryota"/>
</dbReference>
<dbReference type="GeneTree" id="ENSGT00940000157878"/>
<dbReference type="HOGENOM" id="CLU_003535_0_1_1"/>
<dbReference type="InParanoid" id="Q6ZT07"/>
<dbReference type="OMA" id="HMCFYAY"/>
<dbReference type="OrthoDB" id="17687at2759"/>
<dbReference type="PAN-GO" id="Q6ZT07">
    <property type="GO annotations" value="2 GO annotations based on evolutionary models"/>
</dbReference>
<dbReference type="PhylomeDB" id="Q6ZT07"/>
<dbReference type="TreeFam" id="TF313145"/>
<dbReference type="PathwayCommons" id="Q6ZT07"/>
<dbReference type="SignaLink" id="Q6ZT07"/>
<dbReference type="BioGRID-ORCS" id="23158">
    <property type="hits" value="9 hits in 1143 CRISPR screens"/>
</dbReference>
<dbReference type="ChiTaRS" id="TBC1D9">
    <property type="organism name" value="human"/>
</dbReference>
<dbReference type="GeneWiki" id="TBC1D9"/>
<dbReference type="GenomeRNAi" id="23158"/>
<dbReference type="Pharos" id="Q6ZT07">
    <property type="development level" value="Tbio"/>
</dbReference>
<dbReference type="PRO" id="PR:Q6ZT07"/>
<dbReference type="Proteomes" id="UP000005640">
    <property type="component" value="Chromosome 4"/>
</dbReference>
<dbReference type="RNAct" id="Q6ZT07">
    <property type="molecule type" value="protein"/>
</dbReference>
<dbReference type="Bgee" id="ENSG00000109436">
    <property type="expression patterns" value="Expressed in mammary duct and 209 other cell types or tissues"/>
</dbReference>
<dbReference type="GO" id="GO:0005509">
    <property type="term" value="F:calcium ion binding"/>
    <property type="evidence" value="ECO:0007669"/>
    <property type="project" value="InterPro"/>
</dbReference>
<dbReference type="GO" id="GO:0005096">
    <property type="term" value="F:GTPase activator activity"/>
    <property type="evidence" value="ECO:0000318"/>
    <property type="project" value="GO_Central"/>
</dbReference>
<dbReference type="CDD" id="cd13351">
    <property type="entry name" value="PH-GRAM1_TCB1D9_TCB1D9B"/>
    <property type="match status" value="1"/>
</dbReference>
<dbReference type="CDD" id="cd13354">
    <property type="entry name" value="PH-GRAM2_TCB1D9_TCB1D9B"/>
    <property type="match status" value="1"/>
</dbReference>
<dbReference type="FunFam" id="2.30.29.30:FF:000013">
    <property type="entry name" value="Putative TBC1 domain family member 8B"/>
    <property type="match status" value="1"/>
</dbReference>
<dbReference type="FunFam" id="1.10.10.750:FF:000008">
    <property type="entry name" value="TBC1 domain family member 9"/>
    <property type="match status" value="1"/>
</dbReference>
<dbReference type="FunFam" id="1.10.238.10:FF:000119">
    <property type="entry name" value="TBC1 domain family member 9"/>
    <property type="match status" value="1"/>
</dbReference>
<dbReference type="FunFam" id="2.30.29.30:FF:000041">
    <property type="entry name" value="TBC1 domain family member 9 isoform X1"/>
    <property type="match status" value="1"/>
</dbReference>
<dbReference type="FunFam" id="1.10.8.270:FF:000002">
    <property type="entry name" value="TBC1 domain family member 9B"/>
    <property type="match status" value="1"/>
</dbReference>
<dbReference type="FunFam" id="1.10.472.80:FF:000033">
    <property type="entry name" value="TBC1 domain family member 9B isoform X1"/>
    <property type="match status" value="1"/>
</dbReference>
<dbReference type="Gene3D" id="1.10.238.10">
    <property type="entry name" value="EF-hand"/>
    <property type="match status" value="1"/>
</dbReference>
<dbReference type="Gene3D" id="2.30.29.30">
    <property type="entry name" value="Pleckstrin-homology domain (PH domain)/Phosphotyrosine-binding domain (PTB)"/>
    <property type="match status" value="2"/>
</dbReference>
<dbReference type="Gene3D" id="1.10.8.270">
    <property type="entry name" value="putative rabgap domain of human tbc1 domain family member 14 like domains"/>
    <property type="match status" value="1"/>
</dbReference>
<dbReference type="Gene3D" id="1.10.10.750">
    <property type="entry name" value="Ypt/Rab-GAP domain of gyp1p, domain 1"/>
    <property type="match status" value="1"/>
</dbReference>
<dbReference type="Gene3D" id="1.10.472.80">
    <property type="entry name" value="Ypt/Rab-GAP domain of gyp1p, domain 3"/>
    <property type="match status" value="1"/>
</dbReference>
<dbReference type="InterPro" id="IPR011992">
    <property type="entry name" value="EF-hand-dom_pair"/>
</dbReference>
<dbReference type="InterPro" id="IPR002048">
    <property type="entry name" value="EF_hand_dom"/>
</dbReference>
<dbReference type="InterPro" id="IPR004182">
    <property type="entry name" value="GRAM"/>
</dbReference>
<dbReference type="InterPro" id="IPR011993">
    <property type="entry name" value="PH-like_dom_sf"/>
</dbReference>
<dbReference type="InterPro" id="IPR000195">
    <property type="entry name" value="Rab-GAP-TBC_dom"/>
</dbReference>
<dbReference type="InterPro" id="IPR035969">
    <property type="entry name" value="Rab-GAP_TBC_sf"/>
</dbReference>
<dbReference type="InterPro" id="IPR036014">
    <property type="entry name" value="TCB1D9/TCB1D9B_PH-GRAM1"/>
</dbReference>
<dbReference type="InterPro" id="IPR036017">
    <property type="entry name" value="TCB1D9/TCB1D9B_PH-GRAM2"/>
</dbReference>
<dbReference type="PANTHER" id="PTHR47666">
    <property type="entry name" value="PROTEIN VASCULAR ASSOCIATED DEATH 1, CHLOROPLASTIC"/>
    <property type="match status" value="1"/>
</dbReference>
<dbReference type="PANTHER" id="PTHR47666:SF3">
    <property type="entry name" value="TBC1 DOMAIN FAMILY MEMBER 9"/>
    <property type="match status" value="1"/>
</dbReference>
<dbReference type="Pfam" id="PF02893">
    <property type="entry name" value="GRAM"/>
    <property type="match status" value="2"/>
</dbReference>
<dbReference type="Pfam" id="PF00566">
    <property type="entry name" value="RabGAP-TBC"/>
    <property type="match status" value="1"/>
</dbReference>
<dbReference type="SMART" id="SM00568">
    <property type="entry name" value="GRAM"/>
    <property type="match status" value="2"/>
</dbReference>
<dbReference type="SMART" id="SM00164">
    <property type="entry name" value="TBC"/>
    <property type="match status" value="1"/>
</dbReference>
<dbReference type="SUPFAM" id="SSF47473">
    <property type="entry name" value="EF-hand"/>
    <property type="match status" value="1"/>
</dbReference>
<dbReference type="SUPFAM" id="SSF47923">
    <property type="entry name" value="Ypt/Rab-GAP domain of gyp1p"/>
    <property type="match status" value="2"/>
</dbReference>
<dbReference type="PROSITE" id="PS50222">
    <property type="entry name" value="EF_HAND_2"/>
    <property type="match status" value="1"/>
</dbReference>
<dbReference type="PROSITE" id="PS50086">
    <property type="entry name" value="TBC_RABGAP"/>
    <property type="match status" value="1"/>
</dbReference>
<name>TBCD9_HUMAN</name>
<proteinExistence type="evidence at protein level"/>
<keyword id="KW-0343">GTPase activation</keyword>
<keyword id="KW-1267">Proteomics identification</keyword>
<keyword id="KW-1185">Reference proteome</keyword>
<keyword id="KW-0677">Repeat</keyword>
<protein>
    <recommendedName>
        <fullName>TBC1 domain family member 9</fullName>
    </recommendedName>
    <alternativeName>
        <fullName>TBC1 domain family member 9A</fullName>
    </alternativeName>
</protein>
<evidence type="ECO:0000250" key="1"/>
<evidence type="ECO:0000255" key="2">
    <source>
        <dbReference type="PROSITE-ProRule" id="PRU00163"/>
    </source>
</evidence>
<evidence type="ECO:0000255" key="3">
    <source>
        <dbReference type="PROSITE-ProRule" id="PRU00448"/>
    </source>
</evidence>
<evidence type="ECO:0000256" key="4">
    <source>
        <dbReference type="SAM" id="MobiDB-lite"/>
    </source>
</evidence>
<evidence type="ECO:0000305" key="5"/>
<comment type="function">
    <text>May act as a GTPase-activating protein for Rab family protein(s).</text>
</comment>
<comment type="domain">
    <text evidence="1">The arginine and glutamine fingers are critical for the GTPase-activating mechanism, they pull out Rab's 'switch 2' glutamine and insert in Rab's active site.</text>
</comment>
<comment type="sequence caution" evidence="5">
    <conflict type="erroneous initiation">
        <sequence resource="EMBL-CDS" id="BAA74905"/>
    </conflict>
</comment>
<comment type="sequence caution" evidence="5">
    <conflict type="erroneous initiation">
        <sequence resource="EMBL-CDS" id="BAC86789"/>
    </conflict>
    <text>Truncated N-terminus.</text>
</comment>
<comment type="sequence caution" evidence="5">
    <conflict type="miscellaneous discrepancy">
        <sequence resource="EMBL-CDS" id="BAC86789"/>
    </conflict>
    <text>Aberrant splicing.</text>
</comment>
<reference key="1">
    <citation type="journal article" date="2009" name="Genes Cells">
        <title>Identification and characterization of a novel Tre-2/Bub2/Cdc16 (TBC) protein that possesses Rab3A-GAP activity.</title>
        <authorList>
            <person name="Ishibashi K."/>
            <person name="Kanno E."/>
            <person name="Itoh T."/>
            <person name="Fukuda M."/>
        </authorList>
    </citation>
    <scope>NUCLEOTIDE SEQUENCE [MRNA]</scope>
    <source>
        <tissue>Brain</tissue>
    </source>
</reference>
<reference key="2">
    <citation type="journal article" date="1998" name="DNA Res.">
        <title>Prediction of the coding sequences of unidentified human genes. XII. The complete sequences of 100 new cDNA clones from brain which code for large proteins in vitro.</title>
        <authorList>
            <person name="Nagase T."/>
            <person name="Ishikawa K."/>
            <person name="Suyama M."/>
            <person name="Kikuno R."/>
            <person name="Hirosawa M."/>
            <person name="Miyajima N."/>
            <person name="Tanaka A."/>
            <person name="Kotani H."/>
            <person name="Nomura N."/>
            <person name="Ohara O."/>
        </authorList>
    </citation>
    <scope>NUCLEOTIDE SEQUENCE [LARGE SCALE MRNA]</scope>
    <source>
        <tissue>Brain</tissue>
    </source>
</reference>
<reference key="3">
    <citation type="journal article" date="2002" name="DNA Res.">
        <title>Construction of expression-ready cDNA clones for KIAA genes: manual curation of 330 KIAA cDNA clones.</title>
        <authorList>
            <person name="Nakajima D."/>
            <person name="Okazaki N."/>
            <person name="Yamakawa H."/>
            <person name="Kikuno R."/>
            <person name="Ohara O."/>
            <person name="Nagase T."/>
        </authorList>
    </citation>
    <scope>SEQUENCE REVISION</scope>
</reference>
<reference key="4">
    <citation type="submission" date="2005-09" db="EMBL/GenBank/DDBJ databases">
        <authorList>
            <person name="Mural R.J."/>
            <person name="Istrail S."/>
            <person name="Sutton G.G."/>
            <person name="Florea L."/>
            <person name="Halpern A.L."/>
            <person name="Mobarry C.M."/>
            <person name="Lippert R."/>
            <person name="Walenz B."/>
            <person name="Shatkay H."/>
            <person name="Dew I."/>
            <person name="Miller J.R."/>
            <person name="Flanigan M.J."/>
            <person name="Edwards N.J."/>
            <person name="Bolanos R."/>
            <person name="Fasulo D."/>
            <person name="Halldorsson B.V."/>
            <person name="Hannenhalli S."/>
            <person name="Turner R."/>
            <person name="Yooseph S."/>
            <person name="Lu F."/>
            <person name="Nusskern D.R."/>
            <person name="Shue B.C."/>
            <person name="Zheng X.H."/>
            <person name="Zhong F."/>
            <person name="Delcher A.L."/>
            <person name="Huson D.H."/>
            <person name="Kravitz S.A."/>
            <person name="Mouchard L."/>
            <person name="Reinert K."/>
            <person name="Remington K.A."/>
            <person name="Clark A.G."/>
            <person name="Waterman M.S."/>
            <person name="Eichler E.E."/>
            <person name="Adams M.D."/>
            <person name="Hunkapiller M.W."/>
            <person name="Myers E.W."/>
            <person name="Venter J.C."/>
        </authorList>
    </citation>
    <scope>NUCLEOTIDE SEQUENCE [LARGE SCALE GENOMIC DNA]</scope>
</reference>
<reference key="5">
    <citation type="journal article" date="2004" name="Genome Res.">
        <title>The status, quality, and expansion of the NIH full-length cDNA project: the Mammalian Gene Collection (MGC).</title>
        <authorList>
            <consortium name="The MGC Project Team"/>
        </authorList>
    </citation>
    <scope>NUCLEOTIDE SEQUENCE [LARGE SCALE MRNA]</scope>
</reference>
<reference key="6">
    <citation type="journal article" date="2004" name="Nat. Genet.">
        <title>Complete sequencing and characterization of 21,243 full-length human cDNAs.</title>
        <authorList>
            <person name="Ota T."/>
            <person name="Suzuki Y."/>
            <person name="Nishikawa T."/>
            <person name="Otsuki T."/>
            <person name="Sugiyama T."/>
            <person name="Irie R."/>
            <person name="Wakamatsu A."/>
            <person name="Hayashi K."/>
            <person name="Sato H."/>
            <person name="Nagai K."/>
            <person name="Kimura K."/>
            <person name="Makita H."/>
            <person name="Sekine M."/>
            <person name="Obayashi M."/>
            <person name="Nishi T."/>
            <person name="Shibahara T."/>
            <person name="Tanaka T."/>
            <person name="Ishii S."/>
            <person name="Yamamoto J."/>
            <person name="Saito K."/>
            <person name="Kawai Y."/>
            <person name="Isono Y."/>
            <person name="Nakamura Y."/>
            <person name="Nagahari K."/>
            <person name="Murakami K."/>
            <person name="Yasuda T."/>
            <person name="Iwayanagi T."/>
            <person name="Wagatsuma M."/>
            <person name="Shiratori A."/>
            <person name="Sudo H."/>
            <person name="Hosoiri T."/>
            <person name="Kaku Y."/>
            <person name="Kodaira H."/>
            <person name="Kondo H."/>
            <person name="Sugawara M."/>
            <person name="Takahashi M."/>
            <person name="Kanda K."/>
            <person name="Yokoi T."/>
            <person name="Furuya T."/>
            <person name="Kikkawa E."/>
            <person name="Omura Y."/>
            <person name="Abe K."/>
            <person name="Kamihara K."/>
            <person name="Katsuta N."/>
            <person name="Sato K."/>
            <person name="Tanikawa M."/>
            <person name="Yamazaki M."/>
            <person name="Ninomiya K."/>
            <person name="Ishibashi T."/>
            <person name="Yamashita H."/>
            <person name="Murakawa K."/>
            <person name="Fujimori K."/>
            <person name="Tanai H."/>
            <person name="Kimata M."/>
            <person name="Watanabe M."/>
            <person name="Hiraoka S."/>
            <person name="Chiba Y."/>
            <person name="Ishida S."/>
            <person name="Ono Y."/>
            <person name="Takiguchi S."/>
            <person name="Watanabe S."/>
            <person name="Yosida M."/>
            <person name="Hotuta T."/>
            <person name="Kusano J."/>
            <person name="Kanehori K."/>
            <person name="Takahashi-Fujii A."/>
            <person name="Hara H."/>
            <person name="Tanase T.-O."/>
            <person name="Nomura Y."/>
            <person name="Togiya S."/>
            <person name="Komai F."/>
            <person name="Hara R."/>
            <person name="Takeuchi K."/>
            <person name="Arita M."/>
            <person name="Imose N."/>
            <person name="Musashino K."/>
            <person name="Yuuki H."/>
            <person name="Oshima A."/>
            <person name="Sasaki N."/>
            <person name="Aotsuka S."/>
            <person name="Yoshikawa Y."/>
            <person name="Matsunawa H."/>
            <person name="Ichihara T."/>
            <person name="Shiohata N."/>
            <person name="Sano S."/>
            <person name="Moriya S."/>
            <person name="Momiyama H."/>
            <person name="Satoh N."/>
            <person name="Takami S."/>
            <person name="Terashima Y."/>
            <person name="Suzuki O."/>
            <person name="Nakagawa S."/>
            <person name="Senoh A."/>
            <person name="Mizoguchi H."/>
            <person name="Goto Y."/>
            <person name="Shimizu F."/>
            <person name="Wakebe H."/>
            <person name="Hishigaki H."/>
            <person name="Watanabe T."/>
            <person name="Sugiyama A."/>
            <person name="Takemoto M."/>
            <person name="Kawakami B."/>
            <person name="Yamazaki M."/>
            <person name="Watanabe K."/>
            <person name="Kumagai A."/>
            <person name="Itakura S."/>
            <person name="Fukuzumi Y."/>
            <person name="Fujimori Y."/>
            <person name="Komiyama M."/>
            <person name="Tashiro H."/>
            <person name="Tanigami A."/>
            <person name="Fujiwara T."/>
            <person name="Ono T."/>
            <person name="Yamada K."/>
            <person name="Fujii Y."/>
            <person name="Ozaki K."/>
            <person name="Hirao M."/>
            <person name="Ohmori Y."/>
            <person name="Kawabata A."/>
            <person name="Hikiji T."/>
            <person name="Kobatake N."/>
            <person name="Inagaki H."/>
            <person name="Ikema Y."/>
            <person name="Okamoto S."/>
            <person name="Okitani R."/>
            <person name="Kawakami T."/>
            <person name="Noguchi S."/>
            <person name="Itoh T."/>
            <person name="Shigeta K."/>
            <person name="Senba T."/>
            <person name="Matsumura K."/>
            <person name="Nakajima Y."/>
            <person name="Mizuno T."/>
            <person name="Morinaga M."/>
            <person name="Sasaki M."/>
            <person name="Togashi T."/>
            <person name="Oyama M."/>
            <person name="Hata H."/>
            <person name="Watanabe M."/>
            <person name="Komatsu T."/>
            <person name="Mizushima-Sugano J."/>
            <person name="Satoh T."/>
            <person name="Shirai Y."/>
            <person name="Takahashi Y."/>
            <person name="Nakagawa K."/>
            <person name="Okumura K."/>
            <person name="Nagase T."/>
            <person name="Nomura N."/>
            <person name="Kikuchi H."/>
            <person name="Masuho Y."/>
            <person name="Yamashita R."/>
            <person name="Nakai K."/>
            <person name="Yada T."/>
            <person name="Nakamura Y."/>
            <person name="Ohara O."/>
            <person name="Isogai T."/>
            <person name="Sugano S."/>
        </authorList>
    </citation>
    <scope>NUCLEOTIDE SEQUENCE [LARGE SCALE MRNA] OF 148-1266</scope>
    <source>
        <tissue>Brain</tissue>
    </source>
</reference>